<reference key="1">
    <citation type="journal article" date="2007" name="PLoS Genet.">
        <title>A tale of two oxidation states: bacterial colonization of arsenic-rich environments.</title>
        <authorList>
            <person name="Muller D."/>
            <person name="Medigue C."/>
            <person name="Koechler S."/>
            <person name="Barbe V."/>
            <person name="Barakat M."/>
            <person name="Talla E."/>
            <person name="Bonnefoy V."/>
            <person name="Krin E."/>
            <person name="Arsene-Ploetze F."/>
            <person name="Carapito C."/>
            <person name="Chandler M."/>
            <person name="Cournoyer B."/>
            <person name="Cruveiller S."/>
            <person name="Dossat C."/>
            <person name="Duval S."/>
            <person name="Heymann M."/>
            <person name="Leize E."/>
            <person name="Lieutaud A."/>
            <person name="Lievremont D."/>
            <person name="Makita Y."/>
            <person name="Mangenot S."/>
            <person name="Nitschke W."/>
            <person name="Ortet P."/>
            <person name="Perdrial N."/>
            <person name="Schoepp B."/>
            <person name="Siguier P."/>
            <person name="Simeonova D.D."/>
            <person name="Rouy Z."/>
            <person name="Segurens B."/>
            <person name="Turlin E."/>
            <person name="Vallenet D."/>
            <person name="van Dorsselaer A."/>
            <person name="Weiss S."/>
            <person name="Weissenbach J."/>
            <person name="Lett M.-C."/>
            <person name="Danchin A."/>
            <person name="Bertin P.N."/>
        </authorList>
    </citation>
    <scope>NUCLEOTIDE SEQUENCE [LARGE SCALE GENOMIC DNA]</scope>
    <source>
        <strain>ULPAs1</strain>
    </source>
</reference>
<sequence length="396" mass="42997">MAKGKFERTKPHVNVGTIGHVDHGKTTLTAAIATVLSKKFGGEAKGYDQIDNAPEEKARGITINTSHVEYETTTRHYAHVDCPGHADYVKNMITGAAQMDGAILVCSAADGPMPQTREHILLARQVGVPYIIVFLNKCDMVDDAELLELVEMEVRELLSKYEFPGDDLPIIKGSAKLALEGDQGPLGEAAILALADALDSYIPTPERAVDGAFLLPVEDVFSISGRGTVVTGRIERGIVKVGESLEIVGIRDTQVTTCTGVEMFRKLLDQGQAGDNVGVLLRGTKREDVERGQVLAKPGSIKPHKHFTGEIYVLSKDEGGRHTPFFNNYRPQFYFRTTDVTGSIELPKDKEMVMPGDNVSITVMLINPIAMEEGLRFAIREGGRTVGAGVVAKIIE</sequence>
<comment type="function">
    <text evidence="2">GTP hydrolase that promotes the GTP-dependent binding of aminoacyl-tRNA to the A-site of ribosomes during protein biosynthesis.</text>
</comment>
<comment type="catalytic activity">
    <reaction evidence="2">
        <text>GTP + H2O = GDP + phosphate + H(+)</text>
        <dbReference type="Rhea" id="RHEA:19669"/>
        <dbReference type="ChEBI" id="CHEBI:15377"/>
        <dbReference type="ChEBI" id="CHEBI:15378"/>
        <dbReference type="ChEBI" id="CHEBI:37565"/>
        <dbReference type="ChEBI" id="CHEBI:43474"/>
        <dbReference type="ChEBI" id="CHEBI:58189"/>
        <dbReference type="EC" id="3.6.5.3"/>
    </reaction>
    <physiologicalReaction direction="left-to-right" evidence="2">
        <dbReference type="Rhea" id="RHEA:19670"/>
    </physiologicalReaction>
</comment>
<comment type="subunit">
    <text evidence="2">Monomer.</text>
</comment>
<comment type="subcellular location">
    <subcellularLocation>
        <location evidence="2">Cytoplasm</location>
    </subcellularLocation>
</comment>
<comment type="similarity">
    <text evidence="2">Belongs to the TRAFAC class translation factor GTPase superfamily. Classic translation factor GTPase family. EF-Tu/EF-1A subfamily.</text>
</comment>
<accession>A4G9U0</accession>
<evidence type="ECO:0000250" key="1"/>
<evidence type="ECO:0000255" key="2">
    <source>
        <dbReference type="HAMAP-Rule" id="MF_00118"/>
    </source>
</evidence>
<protein>
    <recommendedName>
        <fullName evidence="2">Elongation factor Tu</fullName>
        <shortName evidence="2">EF-Tu</shortName>
        <ecNumber evidence="2">3.6.5.3</ecNumber>
    </recommendedName>
</protein>
<keyword id="KW-0963">Cytoplasm</keyword>
<keyword id="KW-0251">Elongation factor</keyword>
<keyword id="KW-0342">GTP-binding</keyword>
<keyword id="KW-0378">Hydrolase</keyword>
<keyword id="KW-0460">Magnesium</keyword>
<keyword id="KW-0479">Metal-binding</keyword>
<keyword id="KW-0547">Nucleotide-binding</keyword>
<keyword id="KW-0648">Protein biosynthesis</keyword>
<keyword id="KW-1185">Reference proteome</keyword>
<organism>
    <name type="scientific">Herminiimonas arsenicoxydans</name>
    <dbReference type="NCBI Taxonomy" id="204773"/>
    <lineage>
        <taxon>Bacteria</taxon>
        <taxon>Pseudomonadati</taxon>
        <taxon>Pseudomonadota</taxon>
        <taxon>Betaproteobacteria</taxon>
        <taxon>Burkholderiales</taxon>
        <taxon>Oxalobacteraceae</taxon>
        <taxon>Herminiimonas</taxon>
    </lineage>
</organism>
<feature type="chain" id="PRO_0000337405" description="Elongation factor Tu">
    <location>
        <begin position="1"/>
        <end position="396"/>
    </location>
</feature>
<feature type="domain" description="tr-type G">
    <location>
        <begin position="10"/>
        <end position="206"/>
    </location>
</feature>
<feature type="region of interest" description="G1" evidence="1">
    <location>
        <begin position="19"/>
        <end position="26"/>
    </location>
</feature>
<feature type="region of interest" description="G2" evidence="1">
    <location>
        <begin position="60"/>
        <end position="64"/>
    </location>
</feature>
<feature type="region of interest" description="G3" evidence="1">
    <location>
        <begin position="81"/>
        <end position="84"/>
    </location>
</feature>
<feature type="region of interest" description="G4" evidence="1">
    <location>
        <begin position="136"/>
        <end position="139"/>
    </location>
</feature>
<feature type="region of interest" description="G5" evidence="1">
    <location>
        <begin position="174"/>
        <end position="176"/>
    </location>
</feature>
<feature type="binding site" evidence="2">
    <location>
        <begin position="19"/>
        <end position="26"/>
    </location>
    <ligand>
        <name>GTP</name>
        <dbReference type="ChEBI" id="CHEBI:37565"/>
    </ligand>
</feature>
<feature type="binding site" evidence="2">
    <location>
        <position position="26"/>
    </location>
    <ligand>
        <name>Mg(2+)</name>
        <dbReference type="ChEBI" id="CHEBI:18420"/>
    </ligand>
</feature>
<feature type="binding site" evidence="2">
    <location>
        <begin position="81"/>
        <end position="85"/>
    </location>
    <ligand>
        <name>GTP</name>
        <dbReference type="ChEBI" id="CHEBI:37565"/>
    </ligand>
</feature>
<feature type="binding site" evidence="2">
    <location>
        <begin position="136"/>
        <end position="139"/>
    </location>
    <ligand>
        <name>GTP</name>
        <dbReference type="ChEBI" id="CHEBI:37565"/>
    </ligand>
</feature>
<proteinExistence type="inferred from homology"/>
<gene>
    <name evidence="2" type="primary">tuf1</name>
    <name type="synonym">tufB</name>
    <name type="ordered locus">HEAR3168</name>
</gene>
<gene>
    <name evidence="2" type="primary">tuf2</name>
    <name type="synonym">tufA</name>
    <name type="ordered locus">HEAR3180</name>
</gene>
<dbReference type="EC" id="3.6.5.3" evidence="2"/>
<dbReference type="EMBL" id="CU207211">
    <property type="protein sequence ID" value="CAL63277.1"/>
    <property type="molecule type" value="Genomic_DNA"/>
</dbReference>
<dbReference type="EMBL" id="CU207211">
    <property type="protein sequence ID" value="CAL63289.1"/>
    <property type="molecule type" value="Genomic_DNA"/>
</dbReference>
<dbReference type="SMR" id="A4G9U0"/>
<dbReference type="STRING" id="204773.HEAR3168"/>
<dbReference type="KEGG" id="har:HEAR3168"/>
<dbReference type="KEGG" id="har:HEAR3180"/>
<dbReference type="eggNOG" id="COG0050">
    <property type="taxonomic scope" value="Bacteria"/>
</dbReference>
<dbReference type="HOGENOM" id="CLU_007265_0_0_4"/>
<dbReference type="OrthoDB" id="9803139at2"/>
<dbReference type="Proteomes" id="UP000006697">
    <property type="component" value="Chromosome"/>
</dbReference>
<dbReference type="GO" id="GO:0005829">
    <property type="term" value="C:cytosol"/>
    <property type="evidence" value="ECO:0007669"/>
    <property type="project" value="TreeGrafter"/>
</dbReference>
<dbReference type="GO" id="GO:0005525">
    <property type="term" value="F:GTP binding"/>
    <property type="evidence" value="ECO:0007669"/>
    <property type="project" value="UniProtKB-UniRule"/>
</dbReference>
<dbReference type="GO" id="GO:0003924">
    <property type="term" value="F:GTPase activity"/>
    <property type="evidence" value="ECO:0007669"/>
    <property type="project" value="InterPro"/>
</dbReference>
<dbReference type="GO" id="GO:0097216">
    <property type="term" value="F:guanosine tetraphosphate binding"/>
    <property type="evidence" value="ECO:0007669"/>
    <property type="project" value="UniProtKB-ARBA"/>
</dbReference>
<dbReference type="GO" id="GO:0003746">
    <property type="term" value="F:translation elongation factor activity"/>
    <property type="evidence" value="ECO:0007669"/>
    <property type="project" value="UniProtKB-UniRule"/>
</dbReference>
<dbReference type="CDD" id="cd01884">
    <property type="entry name" value="EF_Tu"/>
    <property type="match status" value="1"/>
</dbReference>
<dbReference type="CDD" id="cd03697">
    <property type="entry name" value="EFTU_II"/>
    <property type="match status" value="1"/>
</dbReference>
<dbReference type="CDD" id="cd03707">
    <property type="entry name" value="EFTU_III"/>
    <property type="match status" value="1"/>
</dbReference>
<dbReference type="FunFam" id="2.40.30.10:FF:000001">
    <property type="entry name" value="Elongation factor Tu"/>
    <property type="match status" value="1"/>
</dbReference>
<dbReference type="FunFam" id="3.40.50.300:FF:000003">
    <property type="entry name" value="Elongation factor Tu"/>
    <property type="match status" value="1"/>
</dbReference>
<dbReference type="Gene3D" id="3.40.50.300">
    <property type="entry name" value="P-loop containing nucleotide triphosphate hydrolases"/>
    <property type="match status" value="1"/>
</dbReference>
<dbReference type="Gene3D" id="2.40.30.10">
    <property type="entry name" value="Translation factors"/>
    <property type="match status" value="2"/>
</dbReference>
<dbReference type="HAMAP" id="MF_00118_B">
    <property type="entry name" value="EF_Tu_B"/>
    <property type="match status" value="1"/>
</dbReference>
<dbReference type="InterPro" id="IPR041709">
    <property type="entry name" value="EF-Tu_GTP-bd"/>
</dbReference>
<dbReference type="InterPro" id="IPR050055">
    <property type="entry name" value="EF-Tu_GTPase"/>
</dbReference>
<dbReference type="InterPro" id="IPR004161">
    <property type="entry name" value="EFTu-like_2"/>
</dbReference>
<dbReference type="InterPro" id="IPR033720">
    <property type="entry name" value="EFTU_2"/>
</dbReference>
<dbReference type="InterPro" id="IPR031157">
    <property type="entry name" value="G_TR_CS"/>
</dbReference>
<dbReference type="InterPro" id="IPR027417">
    <property type="entry name" value="P-loop_NTPase"/>
</dbReference>
<dbReference type="InterPro" id="IPR005225">
    <property type="entry name" value="Small_GTP-bd"/>
</dbReference>
<dbReference type="InterPro" id="IPR000795">
    <property type="entry name" value="T_Tr_GTP-bd_dom"/>
</dbReference>
<dbReference type="InterPro" id="IPR009000">
    <property type="entry name" value="Transl_B-barrel_sf"/>
</dbReference>
<dbReference type="InterPro" id="IPR009001">
    <property type="entry name" value="Transl_elong_EF1A/Init_IF2_C"/>
</dbReference>
<dbReference type="InterPro" id="IPR004541">
    <property type="entry name" value="Transl_elong_EFTu/EF1A_bac/org"/>
</dbReference>
<dbReference type="InterPro" id="IPR004160">
    <property type="entry name" value="Transl_elong_EFTu/EF1A_C"/>
</dbReference>
<dbReference type="NCBIfam" id="TIGR00485">
    <property type="entry name" value="EF-Tu"/>
    <property type="match status" value="1"/>
</dbReference>
<dbReference type="NCBIfam" id="NF000766">
    <property type="entry name" value="PRK00049.1"/>
    <property type="match status" value="1"/>
</dbReference>
<dbReference type="NCBIfam" id="NF009372">
    <property type="entry name" value="PRK12735.1"/>
    <property type="match status" value="1"/>
</dbReference>
<dbReference type="NCBIfam" id="NF009373">
    <property type="entry name" value="PRK12736.1"/>
    <property type="match status" value="1"/>
</dbReference>
<dbReference type="NCBIfam" id="TIGR00231">
    <property type="entry name" value="small_GTP"/>
    <property type="match status" value="1"/>
</dbReference>
<dbReference type="PANTHER" id="PTHR43721:SF22">
    <property type="entry name" value="ELONGATION FACTOR TU, MITOCHONDRIAL"/>
    <property type="match status" value="1"/>
</dbReference>
<dbReference type="PANTHER" id="PTHR43721">
    <property type="entry name" value="ELONGATION FACTOR TU-RELATED"/>
    <property type="match status" value="1"/>
</dbReference>
<dbReference type="Pfam" id="PF00009">
    <property type="entry name" value="GTP_EFTU"/>
    <property type="match status" value="1"/>
</dbReference>
<dbReference type="Pfam" id="PF03144">
    <property type="entry name" value="GTP_EFTU_D2"/>
    <property type="match status" value="1"/>
</dbReference>
<dbReference type="Pfam" id="PF03143">
    <property type="entry name" value="GTP_EFTU_D3"/>
    <property type="match status" value="1"/>
</dbReference>
<dbReference type="PRINTS" id="PR00315">
    <property type="entry name" value="ELONGATNFCT"/>
</dbReference>
<dbReference type="SUPFAM" id="SSF50465">
    <property type="entry name" value="EF-Tu/eEF-1alpha/eIF2-gamma C-terminal domain"/>
    <property type="match status" value="1"/>
</dbReference>
<dbReference type="SUPFAM" id="SSF52540">
    <property type="entry name" value="P-loop containing nucleoside triphosphate hydrolases"/>
    <property type="match status" value="1"/>
</dbReference>
<dbReference type="SUPFAM" id="SSF50447">
    <property type="entry name" value="Translation proteins"/>
    <property type="match status" value="1"/>
</dbReference>
<dbReference type="PROSITE" id="PS00301">
    <property type="entry name" value="G_TR_1"/>
    <property type="match status" value="1"/>
</dbReference>
<dbReference type="PROSITE" id="PS51722">
    <property type="entry name" value="G_TR_2"/>
    <property type="match status" value="1"/>
</dbReference>
<name>EFTU_HERAR</name>